<gene>
    <name type="ORF">SPCC23B6.04c</name>
</gene>
<name>YJX4_SCHPO</name>
<protein>
    <recommendedName>
        <fullName>CRAL-TRIO domain-containing protein C23B6.04c</fullName>
    </recommendedName>
</protein>
<sequence>MKDSEHHHHGHNGFSKFLHKLGFGKSKGKSHKSNTSSIHERENTAAKGPASNVRPARPNVSTSSTSNEVRKSVPVGNPTVHTKTGSSSSPASKMRNTVNLQHIQAANQKTRNAEGERKVAQRRVQSDKAEANDAAMSSSAPTVDVSEGNSAAEPKITPDDSDTPRLNVDMNDKINVDEAAAKSDSKLNVDQINSTTESEKRVEKVNPNIANNPLKSPDAVAYSSETVSDEKQPTEHPVSANVPAKSEKAVCDENTKISLTNTEHYKFHSLRGDVEVVVGDLERDGRDTSLGDASVNEAAKETDVDSSRFISDEKAVTEDAMKTEHASNAPLTDERHFQFHSSEGDIEGIVGTMQRQRQSVSSYDTIVPSQFYKQKVVQNSPPSLLSTDNKIPESGSDHPSSQDNSSKASLVENSQTQSSTPRKPLPTTTSPKVNPEPHSESISDTRPSTPRKVPPSTVPKMNPKLQGGNSVTAPSTPSKVLPAMSPKVAPKFQGGRSSTAPSTPNKVLPAASAKAAPKLQEKAASFDIPNKSTIISTKSTVASPIKANENSPALKSKASFEFPKELDPDGTWNAPIPYPDANCPMAPTYRNLTSEQEEMYEEVLKYCLELKEIPVASNSSKKTDLIELERLWLTRECILRYLRATKWHVSNAKKRIVDTLVWRRHFGVNNMDPDEIQEENATGKQVLLGYDKDGRPCLYLYPARQNTKTSPLQIRHLVFSLECAIDLMPPGVETLALLINFKSSSNRSNPSVGQGKEVLNILQTHYCERLGRALVINIPWAVWGFFKLISPFIDPITREKLKFNEPLDRYVPKDQLDSNFGGSLHFEYHHEKYWPQLVELCKSRRLGILEKWRKMGSKIGTSEWDLKGGEEYVELMQQYVRPSLTNRSSSPTVTPTVNTDRQPKTLTNSADELSPQKRRVENPKPVVKDEGPVSIVEDEESTPVVTKKEDSIPVAQSTKADAGLDAENDLLPKSGSGVSETPAFSHARDVSTASFSDAVSFITADSIE</sequence>
<reference key="1">
    <citation type="journal article" date="2002" name="Nature">
        <title>The genome sequence of Schizosaccharomyces pombe.</title>
        <authorList>
            <person name="Wood V."/>
            <person name="Gwilliam R."/>
            <person name="Rajandream M.A."/>
            <person name="Lyne M.H."/>
            <person name="Lyne R."/>
            <person name="Stewart A."/>
            <person name="Sgouros J.G."/>
            <person name="Peat N."/>
            <person name="Hayles J."/>
            <person name="Baker S.G."/>
            <person name="Basham D."/>
            <person name="Bowman S."/>
            <person name="Brooks K."/>
            <person name="Brown D."/>
            <person name="Brown S."/>
            <person name="Chillingworth T."/>
            <person name="Churcher C.M."/>
            <person name="Collins M."/>
            <person name="Connor R."/>
            <person name="Cronin A."/>
            <person name="Davis P."/>
            <person name="Feltwell T."/>
            <person name="Fraser A."/>
            <person name="Gentles S."/>
            <person name="Goble A."/>
            <person name="Hamlin N."/>
            <person name="Harris D.E."/>
            <person name="Hidalgo J."/>
            <person name="Hodgson G."/>
            <person name="Holroyd S."/>
            <person name="Hornsby T."/>
            <person name="Howarth S."/>
            <person name="Huckle E.J."/>
            <person name="Hunt S."/>
            <person name="Jagels K."/>
            <person name="James K.D."/>
            <person name="Jones L."/>
            <person name="Jones M."/>
            <person name="Leather S."/>
            <person name="McDonald S."/>
            <person name="McLean J."/>
            <person name="Mooney P."/>
            <person name="Moule S."/>
            <person name="Mungall K.L."/>
            <person name="Murphy L.D."/>
            <person name="Niblett D."/>
            <person name="Odell C."/>
            <person name="Oliver K."/>
            <person name="O'Neil S."/>
            <person name="Pearson D."/>
            <person name="Quail M.A."/>
            <person name="Rabbinowitsch E."/>
            <person name="Rutherford K.M."/>
            <person name="Rutter S."/>
            <person name="Saunders D."/>
            <person name="Seeger K."/>
            <person name="Sharp S."/>
            <person name="Skelton J."/>
            <person name="Simmonds M.N."/>
            <person name="Squares R."/>
            <person name="Squares S."/>
            <person name="Stevens K."/>
            <person name="Taylor K."/>
            <person name="Taylor R.G."/>
            <person name="Tivey A."/>
            <person name="Walsh S.V."/>
            <person name="Warren T."/>
            <person name="Whitehead S."/>
            <person name="Woodward J.R."/>
            <person name="Volckaert G."/>
            <person name="Aert R."/>
            <person name="Robben J."/>
            <person name="Grymonprez B."/>
            <person name="Weltjens I."/>
            <person name="Vanstreels E."/>
            <person name="Rieger M."/>
            <person name="Schaefer M."/>
            <person name="Mueller-Auer S."/>
            <person name="Gabel C."/>
            <person name="Fuchs M."/>
            <person name="Duesterhoeft A."/>
            <person name="Fritzc C."/>
            <person name="Holzer E."/>
            <person name="Moestl D."/>
            <person name="Hilbert H."/>
            <person name="Borzym K."/>
            <person name="Langer I."/>
            <person name="Beck A."/>
            <person name="Lehrach H."/>
            <person name="Reinhardt R."/>
            <person name="Pohl T.M."/>
            <person name="Eger P."/>
            <person name="Zimmermann W."/>
            <person name="Wedler H."/>
            <person name="Wambutt R."/>
            <person name="Purnelle B."/>
            <person name="Goffeau A."/>
            <person name="Cadieu E."/>
            <person name="Dreano S."/>
            <person name="Gloux S."/>
            <person name="Lelaure V."/>
            <person name="Mottier S."/>
            <person name="Galibert F."/>
            <person name="Aves S.J."/>
            <person name="Xiang Z."/>
            <person name="Hunt C."/>
            <person name="Moore K."/>
            <person name="Hurst S.M."/>
            <person name="Lucas M."/>
            <person name="Rochet M."/>
            <person name="Gaillardin C."/>
            <person name="Tallada V.A."/>
            <person name="Garzon A."/>
            <person name="Thode G."/>
            <person name="Daga R.R."/>
            <person name="Cruzado L."/>
            <person name="Jimenez J."/>
            <person name="Sanchez M."/>
            <person name="del Rey F."/>
            <person name="Benito J."/>
            <person name="Dominguez A."/>
            <person name="Revuelta J.L."/>
            <person name="Moreno S."/>
            <person name="Armstrong J."/>
            <person name="Forsburg S.L."/>
            <person name="Cerutti L."/>
            <person name="Lowe T."/>
            <person name="McCombie W.R."/>
            <person name="Paulsen I."/>
            <person name="Potashkin J."/>
            <person name="Shpakovski G.V."/>
            <person name="Ussery D."/>
            <person name="Barrell B.G."/>
            <person name="Nurse P."/>
        </authorList>
    </citation>
    <scope>NUCLEOTIDE SEQUENCE [LARGE SCALE GENOMIC DNA]</scope>
    <source>
        <strain>972 / ATCC 24843</strain>
    </source>
</reference>
<reference key="2">
    <citation type="journal article" date="2000" name="Genes Cells">
        <title>Large-scale screening of intracellular protein localization in living fission yeast cells by the use of a GFP-fusion genomic DNA library.</title>
        <authorList>
            <person name="Ding D.-Q."/>
            <person name="Tomita Y."/>
            <person name="Yamamoto A."/>
            <person name="Chikashige Y."/>
            <person name="Haraguchi T."/>
            <person name="Hiraoka Y."/>
        </authorList>
    </citation>
    <scope>NUCLEOTIDE SEQUENCE [LARGE SCALE GENOMIC DNA] OF 397-567</scope>
    <scope>SUBCELLULAR LOCATION</scope>
    <source>
        <strain>ATCC 38364 / 968</strain>
    </source>
</reference>
<reference key="3">
    <citation type="journal article" date="2008" name="J. Proteome Res.">
        <title>Phosphoproteome analysis of fission yeast.</title>
        <authorList>
            <person name="Wilson-Grady J.T."/>
            <person name="Villen J."/>
            <person name="Gygi S.P."/>
        </authorList>
    </citation>
    <scope>PHOSPHORYLATION [LARGE SCALE ANALYSIS] AT SER-525; SER-559; SER-888 AND SER-890</scope>
    <scope>IDENTIFICATION BY MASS SPECTROMETRY</scope>
</reference>
<proteinExistence type="evidence at protein level"/>
<evidence type="ECO:0000255" key="1">
    <source>
        <dbReference type="PROSITE-ProRule" id="PRU00056"/>
    </source>
</evidence>
<evidence type="ECO:0000256" key="2">
    <source>
        <dbReference type="SAM" id="MobiDB-lite"/>
    </source>
</evidence>
<evidence type="ECO:0000269" key="3">
    <source>
    </source>
</evidence>
<evidence type="ECO:0000269" key="4">
    <source>
    </source>
</evidence>
<dbReference type="EMBL" id="CU329672">
    <property type="protein sequence ID" value="CAB51563.1"/>
    <property type="molecule type" value="Genomic_DNA"/>
</dbReference>
<dbReference type="EMBL" id="AB027995">
    <property type="protein sequence ID" value="BAA87299.1"/>
    <property type="molecule type" value="Genomic_DNA"/>
</dbReference>
<dbReference type="PIR" id="T41244">
    <property type="entry name" value="T41244"/>
</dbReference>
<dbReference type="SMR" id="Q9UU99"/>
<dbReference type="BioGRID" id="275692">
    <property type="interactions" value="3"/>
</dbReference>
<dbReference type="FunCoup" id="Q9UU99">
    <property type="interactions" value="1"/>
</dbReference>
<dbReference type="STRING" id="284812.Q9UU99"/>
<dbReference type="iPTMnet" id="Q9UU99"/>
<dbReference type="PaxDb" id="4896-SPCC23B6.04c.1"/>
<dbReference type="EnsemblFungi" id="SPCC23B6.04c.1">
    <property type="protein sequence ID" value="SPCC23B6.04c.1:pep"/>
    <property type="gene ID" value="SPCC23B6.04c"/>
</dbReference>
<dbReference type="KEGG" id="spo:2539120"/>
<dbReference type="PomBase" id="SPCC23B6.04c"/>
<dbReference type="VEuPathDB" id="FungiDB:SPCC23B6.04c"/>
<dbReference type="eggNOG" id="KOG1470">
    <property type="taxonomic scope" value="Eukaryota"/>
</dbReference>
<dbReference type="HOGENOM" id="CLU_298293_0_0_1"/>
<dbReference type="InParanoid" id="Q9UU99"/>
<dbReference type="PRO" id="PR:Q9UU99"/>
<dbReference type="Proteomes" id="UP000002485">
    <property type="component" value="Chromosome III"/>
</dbReference>
<dbReference type="GO" id="GO:0005886">
    <property type="term" value="C:plasma membrane"/>
    <property type="evidence" value="ECO:0000314"/>
    <property type="project" value="PomBase"/>
</dbReference>
<dbReference type="GO" id="GO:0005628">
    <property type="term" value="C:prospore membrane"/>
    <property type="evidence" value="ECO:0000314"/>
    <property type="project" value="PomBase"/>
</dbReference>
<dbReference type="GO" id="GO:0035091">
    <property type="term" value="F:phosphatidylinositol binding"/>
    <property type="evidence" value="ECO:0000269"/>
    <property type="project" value="PomBase"/>
</dbReference>
<dbReference type="GO" id="GO:0008526">
    <property type="term" value="F:phosphatidylinositol transfer activity"/>
    <property type="evidence" value="ECO:0000318"/>
    <property type="project" value="GO_Central"/>
</dbReference>
<dbReference type="GO" id="GO:0120010">
    <property type="term" value="P:intermembrane phospholipid transfer"/>
    <property type="evidence" value="ECO:0000315"/>
    <property type="project" value="PomBase"/>
</dbReference>
<dbReference type="CDD" id="cd00170">
    <property type="entry name" value="SEC14"/>
    <property type="match status" value="1"/>
</dbReference>
<dbReference type="FunFam" id="3.40.525.10:FF:000013">
    <property type="entry name" value="Phosphatidylinositol transfer protein PDR16"/>
    <property type="match status" value="1"/>
</dbReference>
<dbReference type="Gene3D" id="3.40.525.10">
    <property type="entry name" value="CRAL-TRIO lipid binding domain"/>
    <property type="match status" value="1"/>
</dbReference>
<dbReference type="InterPro" id="IPR001251">
    <property type="entry name" value="CRAL-TRIO_dom"/>
</dbReference>
<dbReference type="InterPro" id="IPR036865">
    <property type="entry name" value="CRAL-TRIO_dom_sf"/>
</dbReference>
<dbReference type="InterPro" id="IPR011074">
    <property type="entry name" value="CRAL/TRIO_N_dom"/>
</dbReference>
<dbReference type="InterPro" id="IPR036273">
    <property type="entry name" value="CRAL/TRIO_N_dom_sf"/>
</dbReference>
<dbReference type="InterPro" id="IPR052578">
    <property type="entry name" value="PI_Transfer_CRAL-TRIO"/>
</dbReference>
<dbReference type="PANTHER" id="PTHR45824">
    <property type="entry name" value="GH16843P"/>
    <property type="match status" value="1"/>
</dbReference>
<dbReference type="PANTHER" id="PTHR45824:SF29">
    <property type="entry name" value="GH16843P"/>
    <property type="match status" value="1"/>
</dbReference>
<dbReference type="Pfam" id="PF00650">
    <property type="entry name" value="CRAL_TRIO"/>
    <property type="match status" value="1"/>
</dbReference>
<dbReference type="Pfam" id="PF03765">
    <property type="entry name" value="CRAL_TRIO_N"/>
    <property type="match status" value="1"/>
</dbReference>
<dbReference type="SMART" id="SM01100">
    <property type="entry name" value="CRAL_TRIO_N"/>
    <property type="match status" value="1"/>
</dbReference>
<dbReference type="SMART" id="SM00516">
    <property type="entry name" value="SEC14"/>
    <property type="match status" value="1"/>
</dbReference>
<dbReference type="SUPFAM" id="SSF52087">
    <property type="entry name" value="CRAL/TRIO domain"/>
    <property type="match status" value="1"/>
</dbReference>
<dbReference type="SUPFAM" id="SSF46938">
    <property type="entry name" value="CRAL/TRIO N-terminal domain"/>
    <property type="match status" value="1"/>
</dbReference>
<dbReference type="PROSITE" id="PS50191">
    <property type="entry name" value="CRAL_TRIO"/>
    <property type="match status" value="1"/>
</dbReference>
<accession>Q9UU99</accession>
<accession>Q9UTU4</accession>
<organism>
    <name type="scientific">Schizosaccharomyces pombe (strain 972 / ATCC 24843)</name>
    <name type="common">Fission yeast</name>
    <dbReference type="NCBI Taxonomy" id="284812"/>
    <lineage>
        <taxon>Eukaryota</taxon>
        <taxon>Fungi</taxon>
        <taxon>Dikarya</taxon>
        <taxon>Ascomycota</taxon>
        <taxon>Taphrinomycotina</taxon>
        <taxon>Schizosaccharomycetes</taxon>
        <taxon>Schizosaccharomycetales</taxon>
        <taxon>Schizosaccharomycetaceae</taxon>
        <taxon>Schizosaccharomyces</taxon>
    </lineage>
</organism>
<keyword id="KW-1003">Cell membrane</keyword>
<keyword id="KW-0472">Membrane</keyword>
<keyword id="KW-0597">Phosphoprotein</keyword>
<keyword id="KW-1185">Reference proteome</keyword>
<feature type="chain" id="PRO_0000210750" description="CRAL-TRIO domain-containing protein C23B6.04c">
    <location>
        <begin position="1"/>
        <end position="1008"/>
    </location>
</feature>
<feature type="domain" description="CRAL-TRIO" evidence="1">
    <location>
        <begin position="675"/>
        <end position="828"/>
    </location>
</feature>
<feature type="region of interest" description="Disordered" evidence="2">
    <location>
        <begin position="1"/>
        <end position="247"/>
    </location>
</feature>
<feature type="region of interest" description="Disordered" evidence="2">
    <location>
        <begin position="284"/>
        <end position="306"/>
    </location>
</feature>
<feature type="region of interest" description="Disordered" evidence="2">
    <location>
        <begin position="374"/>
        <end position="514"/>
    </location>
</feature>
<feature type="region of interest" description="Disordered" evidence="2">
    <location>
        <begin position="883"/>
        <end position="982"/>
    </location>
</feature>
<feature type="compositionally biased region" description="Polar residues" evidence="2">
    <location>
        <begin position="79"/>
        <end position="110"/>
    </location>
</feature>
<feature type="compositionally biased region" description="Basic and acidic residues" evidence="2">
    <location>
        <begin position="111"/>
        <end position="131"/>
    </location>
</feature>
<feature type="compositionally biased region" description="Basic and acidic residues" evidence="2">
    <location>
        <begin position="170"/>
        <end position="187"/>
    </location>
</feature>
<feature type="compositionally biased region" description="Polar residues" evidence="2">
    <location>
        <begin position="374"/>
        <end position="389"/>
    </location>
</feature>
<feature type="compositionally biased region" description="Polar residues" evidence="2">
    <location>
        <begin position="397"/>
        <end position="432"/>
    </location>
</feature>
<feature type="compositionally biased region" description="Polar residues" evidence="2">
    <location>
        <begin position="467"/>
        <end position="478"/>
    </location>
</feature>
<feature type="compositionally biased region" description="Polar residues" evidence="2">
    <location>
        <begin position="495"/>
        <end position="505"/>
    </location>
</feature>
<feature type="compositionally biased region" description="Low complexity" evidence="2">
    <location>
        <begin position="885"/>
        <end position="899"/>
    </location>
</feature>
<feature type="compositionally biased region" description="Basic and acidic residues" evidence="2">
    <location>
        <begin position="914"/>
        <end position="931"/>
    </location>
</feature>
<feature type="modified residue" description="Phosphoserine" evidence="4">
    <location>
        <position position="525"/>
    </location>
</feature>
<feature type="modified residue" description="Phosphoserine" evidence="4">
    <location>
        <position position="559"/>
    </location>
</feature>
<feature type="modified residue" description="Phosphoserine" evidence="4">
    <location>
        <position position="888"/>
    </location>
</feature>
<feature type="modified residue" description="Phosphoserine" evidence="4">
    <location>
        <position position="890"/>
    </location>
</feature>
<comment type="subcellular location">
    <subcellularLocation>
        <location evidence="3">Cell membrane</location>
        <topology evidence="3">Peripheral membrane protein</topology>
    </subcellularLocation>
    <text>Cell periphery.</text>
</comment>